<proteinExistence type="evidence at transcript level"/>
<evidence type="ECO:0000250" key="1"/>
<evidence type="ECO:0000255" key="2">
    <source>
        <dbReference type="PROSITE-ProRule" id="PRU00160"/>
    </source>
</evidence>
<evidence type="ECO:0000255" key="3">
    <source>
        <dbReference type="PROSITE-ProRule" id="PRU10044"/>
    </source>
</evidence>
<evidence type="ECO:0000305" key="4"/>
<organism>
    <name type="scientific">Styela plicata</name>
    <name type="common">Wrinkled sea squirt</name>
    <name type="synonym">Ascidia plicata</name>
    <dbReference type="NCBI Taxonomy" id="7726"/>
    <lineage>
        <taxon>Eukaryota</taxon>
        <taxon>Metazoa</taxon>
        <taxon>Chordata</taxon>
        <taxon>Tunicata</taxon>
        <taxon>Ascidiacea</taxon>
        <taxon>Stolidobranchia</taxon>
        <taxon>Styelidae</taxon>
        <taxon>Styela</taxon>
    </lineage>
</organism>
<protein>
    <recommendedName>
        <fullName>Tyrosine-protein phosphatase 3</fullName>
        <ecNumber>3.1.3.48</ecNumber>
    </recommendedName>
</protein>
<reference key="1">
    <citation type="journal article" date="1991" name="Immunogenetics">
        <title>Protein tyrosine phosphatase domains from the protochordate Styela plicata.</title>
        <authorList>
            <person name="Matthews R.J."/>
            <person name="Flores E."/>
            <person name="Thomas M.L."/>
        </authorList>
    </citation>
    <scope>NUCLEOTIDE SEQUENCE [MRNA]</scope>
</reference>
<keyword id="KW-0378">Hydrolase</keyword>
<keyword id="KW-0904">Protein phosphatase</keyword>
<dbReference type="EC" id="3.1.3.48"/>
<dbReference type="EMBL" id="M37988">
    <property type="protein sequence ID" value="AAA29821.1"/>
    <property type="molecule type" value="mRNA"/>
</dbReference>
<dbReference type="SMR" id="P28195"/>
<dbReference type="GO" id="GO:0004725">
    <property type="term" value="F:protein tyrosine phosphatase activity"/>
    <property type="evidence" value="ECO:0007669"/>
    <property type="project" value="UniProtKB-EC"/>
</dbReference>
<dbReference type="CDD" id="cd00047">
    <property type="entry name" value="PTPc"/>
    <property type="match status" value="1"/>
</dbReference>
<dbReference type="Gene3D" id="3.90.190.10">
    <property type="entry name" value="Protein tyrosine phosphatase superfamily"/>
    <property type="match status" value="1"/>
</dbReference>
<dbReference type="InterPro" id="IPR029021">
    <property type="entry name" value="Prot-tyrosine_phosphatase-like"/>
</dbReference>
<dbReference type="InterPro" id="IPR050348">
    <property type="entry name" value="Protein-Tyr_Phosphatase"/>
</dbReference>
<dbReference type="InterPro" id="IPR000242">
    <property type="entry name" value="PTP_cat"/>
</dbReference>
<dbReference type="PANTHER" id="PTHR19134:SF561">
    <property type="entry name" value="PROTEIN TYROSINE PHOSPHATASE 36E, ISOFORM A"/>
    <property type="match status" value="1"/>
</dbReference>
<dbReference type="PANTHER" id="PTHR19134">
    <property type="entry name" value="RECEPTOR-TYPE TYROSINE-PROTEIN PHOSPHATASE"/>
    <property type="match status" value="1"/>
</dbReference>
<dbReference type="Pfam" id="PF00102">
    <property type="entry name" value="Y_phosphatase"/>
    <property type="match status" value="1"/>
</dbReference>
<dbReference type="SUPFAM" id="SSF52799">
    <property type="entry name" value="(Phosphotyrosine protein) phosphatases II"/>
    <property type="match status" value="1"/>
</dbReference>
<dbReference type="PROSITE" id="PS50055">
    <property type="entry name" value="TYR_PHOSPHATASE_PTP"/>
    <property type="match status" value="1"/>
</dbReference>
<accession>P28195</accession>
<feature type="chain" id="PRO_0000094891" description="Tyrosine-protein phosphatase 3">
    <location>
        <begin position="1" status="less than"/>
        <end position="110" status="greater than"/>
    </location>
</feature>
<feature type="domain" description="Tyrosine-protein phosphatase" evidence="2">
    <location>
        <begin position="1" status="less than"/>
        <end position="110" status="greater than"/>
    </location>
</feature>
<feature type="binding site" evidence="1">
    <location>
        <position position="80"/>
    </location>
    <ligand>
        <name>substrate</name>
    </ligand>
</feature>
<feature type="non-terminal residue">
    <location>
        <position position="1"/>
    </location>
</feature>
<feature type="non-terminal residue">
    <location>
        <position position="110"/>
    </location>
</feature>
<name>PTP3_STYPL</name>
<comment type="catalytic activity">
    <reaction evidence="3">
        <text>O-phospho-L-tyrosyl-[protein] + H2O = L-tyrosyl-[protein] + phosphate</text>
        <dbReference type="Rhea" id="RHEA:10684"/>
        <dbReference type="Rhea" id="RHEA-COMP:10136"/>
        <dbReference type="Rhea" id="RHEA-COMP:20101"/>
        <dbReference type="ChEBI" id="CHEBI:15377"/>
        <dbReference type="ChEBI" id="CHEBI:43474"/>
        <dbReference type="ChEBI" id="CHEBI:46858"/>
        <dbReference type="ChEBI" id="CHEBI:61978"/>
        <dbReference type="EC" id="3.1.3.48"/>
    </reaction>
</comment>
<comment type="miscellaneous">
    <text>STY 3 and STY 6 may represent a double domain transmembrane protein tyrosine phosphatase.</text>
</comment>
<comment type="similarity">
    <text evidence="4">Belongs to the protein-tyrosine phosphatase family.</text>
</comment>
<sequence>QKCATIVMVTNLLEAKKLKCHQYWPGEDTNEGETEKYGYFLVTLTDVKTRNFFVTRTFNFNNSTTLPSIIRQLHYTAWPDFGVPKNPHELLLFRRRVIAANPPHSGPIVV</sequence>
<gene>
    <name type="primary">STY-3</name>
</gene>